<dbReference type="EMBL" id="M84338">
    <property type="protein sequence ID" value="AAA25025.1"/>
    <property type="molecule type" value="Genomic_DNA"/>
</dbReference>
<dbReference type="EMBL" id="AE000511">
    <property type="protein sequence ID" value="AAD07131.1"/>
    <property type="molecule type" value="Genomic_DNA"/>
</dbReference>
<dbReference type="PIR" id="D64528">
    <property type="entry name" value="D64528"/>
</dbReference>
<dbReference type="RefSeq" id="NP_206868.1">
    <property type="nucleotide sequence ID" value="NC_000915.1"/>
</dbReference>
<dbReference type="RefSeq" id="WP_000238762.1">
    <property type="nucleotide sequence ID" value="NC_018939.1"/>
</dbReference>
<dbReference type="PDB" id="4HI0">
    <property type="method" value="X-ray"/>
    <property type="resolution" value="2.35 A"/>
    <property type="chains" value="E/F=1-199"/>
</dbReference>
<dbReference type="PDBsum" id="4HI0"/>
<dbReference type="SMR" id="Q09066"/>
<dbReference type="DIP" id="DIP-3131N"/>
<dbReference type="IntAct" id="Q09066">
    <property type="interactions" value="3"/>
</dbReference>
<dbReference type="MINT" id="Q09066"/>
<dbReference type="STRING" id="85962.HP_0068"/>
<dbReference type="PaxDb" id="85962-C694_00325"/>
<dbReference type="DNASU" id="899102"/>
<dbReference type="EnsemblBacteria" id="AAD07131">
    <property type="protein sequence ID" value="AAD07131"/>
    <property type="gene ID" value="HP_0068"/>
</dbReference>
<dbReference type="KEGG" id="heo:C694_00325"/>
<dbReference type="KEGG" id="hpy:HP_0068"/>
<dbReference type="PATRIC" id="fig|85962.47.peg.71"/>
<dbReference type="eggNOG" id="COG0378">
    <property type="taxonomic scope" value="Bacteria"/>
</dbReference>
<dbReference type="InParanoid" id="Q09066"/>
<dbReference type="OrthoDB" id="9802035at2"/>
<dbReference type="PhylomeDB" id="Q09066"/>
<dbReference type="BioCyc" id="MetaCyc:HP_RS00345-MONOMER"/>
<dbReference type="EvolutionaryTrace" id="Q09066"/>
<dbReference type="Proteomes" id="UP000000429">
    <property type="component" value="Chromosome"/>
</dbReference>
<dbReference type="GO" id="GO:0005737">
    <property type="term" value="C:cytoplasm"/>
    <property type="evidence" value="ECO:0007669"/>
    <property type="project" value="UniProtKB-SubCell"/>
</dbReference>
<dbReference type="GO" id="GO:0005525">
    <property type="term" value="F:GTP binding"/>
    <property type="evidence" value="ECO:0007669"/>
    <property type="project" value="UniProtKB-KW"/>
</dbReference>
<dbReference type="GO" id="GO:0003924">
    <property type="term" value="F:GTPase activity"/>
    <property type="evidence" value="ECO:0007669"/>
    <property type="project" value="InterPro"/>
</dbReference>
<dbReference type="GO" id="GO:0042802">
    <property type="term" value="F:identical protein binding"/>
    <property type="evidence" value="ECO:0000353"/>
    <property type="project" value="IntAct"/>
</dbReference>
<dbReference type="GO" id="GO:0016151">
    <property type="term" value="F:nickel cation binding"/>
    <property type="evidence" value="ECO:0007669"/>
    <property type="project" value="InterPro"/>
</dbReference>
<dbReference type="GO" id="GO:0043419">
    <property type="term" value="P:urea catabolic process"/>
    <property type="evidence" value="ECO:0007669"/>
    <property type="project" value="InterPro"/>
</dbReference>
<dbReference type="CDD" id="cd05540">
    <property type="entry name" value="UreG"/>
    <property type="match status" value="1"/>
</dbReference>
<dbReference type="FunFam" id="3.40.50.300:FF:000208">
    <property type="entry name" value="Urease accessory protein UreG"/>
    <property type="match status" value="1"/>
</dbReference>
<dbReference type="Gene3D" id="3.40.50.300">
    <property type="entry name" value="P-loop containing nucleotide triphosphate hydrolases"/>
    <property type="match status" value="1"/>
</dbReference>
<dbReference type="HAMAP" id="MF_01389">
    <property type="entry name" value="UreG"/>
    <property type="match status" value="1"/>
</dbReference>
<dbReference type="InterPro" id="IPR003495">
    <property type="entry name" value="CobW/HypB/UreG_nucleotide-bd"/>
</dbReference>
<dbReference type="InterPro" id="IPR027417">
    <property type="entry name" value="P-loop_NTPase"/>
</dbReference>
<dbReference type="InterPro" id="IPR004400">
    <property type="entry name" value="UreG"/>
</dbReference>
<dbReference type="NCBIfam" id="TIGR00101">
    <property type="entry name" value="ureG"/>
    <property type="match status" value="1"/>
</dbReference>
<dbReference type="PANTHER" id="PTHR31715">
    <property type="entry name" value="UREASE ACCESSORY PROTEIN G"/>
    <property type="match status" value="1"/>
</dbReference>
<dbReference type="PANTHER" id="PTHR31715:SF0">
    <property type="entry name" value="UREASE ACCESSORY PROTEIN G"/>
    <property type="match status" value="1"/>
</dbReference>
<dbReference type="Pfam" id="PF02492">
    <property type="entry name" value="cobW"/>
    <property type="match status" value="1"/>
</dbReference>
<dbReference type="PIRSF" id="PIRSF005624">
    <property type="entry name" value="Ni-bind_GTPase"/>
    <property type="match status" value="1"/>
</dbReference>
<dbReference type="SUPFAM" id="SSF52540">
    <property type="entry name" value="P-loop containing nucleoside triphosphate hydrolases"/>
    <property type="match status" value="1"/>
</dbReference>
<sequence length="199" mass="21955">MVKIGVCGPVGSGKTALIEALTRHMSKDYDMAVITNDIYTKEDAEFMCKNSVMPRERIIGVETGGCPHTAIREDASMNLEAVEEMHGRFPNLELLLIESGGDNLSATFNPELADFTIFVIDVAEGDKIPRKGGPGITRSDLLVINKIDLAPYVGADLKVMERDSKKMRGEKPFIFTNIRAKEGLDDVIAWIKRNALLED</sequence>
<comment type="function">
    <text evidence="1">Facilitates the functional incorporation of the urease nickel metallocenter. This process requires GTP hydrolysis, probably effectuated by UreG.</text>
</comment>
<comment type="subunit">
    <text evidence="1">Homodimer. UreH, UreF and UreG form a complex that acts as a GTP-hydrolysis-dependent molecular chaperone, activating the urease apoprotein by helping to assemble the nickel containing metallocenter of UreC. The UreE protein probably delivers the nickel.</text>
</comment>
<comment type="interaction">
    <interactant intactId="EBI-7742750">
        <id>Q09066</id>
    </interactant>
    <interactant intactId="EBI-7742396">
        <id>Q09064</id>
        <label>ureE</label>
    </interactant>
    <organismsDiffer>false</organismsDiffer>
    <experiments>3</experiments>
</comment>
<comment type="interaction">
    <interactant intactId="EBI-7742750">
        <id>Q09066</id>
    </interactant>
    <interactant intactId="EBI-7743673">
        <id>Q09065</id>
        <label>ureF</label>
    </interactant>
    <organismsDiffer>false</organismsDiffer>
    <experiments>6</experiments>
</comment>
<comment type="interaction">
    <interactant intactId="EBI-7742750">
        <id>Q09066</id>
    </interactant>
    <interactant intactId="EBI-7742750">
        <id>Q09066</id>
        <label>ureG</label>
    </interactant>
    <organismsDiffer>false</organismsDiffer>
    <experiments>3</experiments>
</comment>
<comment type="subcellular location">
    <subcellularLocation>
        <location evidence="1">Cytoplasm</location>
    </subcellularLocation>
</comment>
<comment type="disruption phenotype">
    <text evidence="2">Cells do not express urease.</text>
</comment>
<comment type="similarity">
    <text evidence="1">Belongs to the SIMIBI class G3E GTPase family. UreG subfamily.</text>
</comment>
<evidence type="ECO:0000255" key="1">
    <source>
        <dbReference type="HAMAP-Rule" id="MF_01389"/>
    </source>
</evidence>
<evidence type="ECO:0000269" key="2">
    <source>
    </source>
</evidence>
<evidence type="ECO:0000269" key="3">
    <source>
    </source>
</evidence>
<evidence type="ECO:0000305" key="4"/>
<evidence type="ECO:0007829" key="5">
    <source>
        <dbReference type="PDB" id="4HI0"/>
    </source>
</evidence>
<name>UREG_HELPY</name>
<keyword id="KW-0002">3D-structure</keyword>
<keyword id="KW-0143">Chaperone</keyword>
<keyword id="KW-0963">Cytoplasm</keyword>
<keyword id="KW-0342">GTP-binding</keyword>
<keyword id="KW-0996">Nickel insertion</keyword>
<keyword id="KW-0547">Nucleotide-binding</keyword>
<keyword id="KW-1185">Reference proteome</keyword>
<keyword id="KW-0843">Virulence</keyword>
<proteinExistence type="evidence at protein level"/>
<organism>
    <name type="scientific">Helicobacter pylori (strain ATCC 700392 / 26695)</name>
    <name type="common">Campylobacter pylori</name>
    <dbReference type="NCBI Taxonomy" id="85962"/>
    <lineage>
        <taxon>Bacteria</taxon>
        <taxon>Pseudomonadati</taxon>
        <taxon>Campylobacterota</taxon>
        <taxon>Epsilonproteobacteria</taxon>
        <taxon>Campylobacterales</taxon>
        <taxon>Helicobacteraceae</taxon>
        <taxon>Helicobacter</taxon>
    </lineage>
</organism>
<feature type="chain" id="PRO_0000067667" description="Urease accessory protein UreG">
    <location>
        <begin position="1"/>
        <end position="199"/>
    </location>
</feature>
<feature type="binding site" evidence="1">
    <location>
        <begin position="8"/>
        <end position="15"/>
    </location>
    <ligand>
        <name>GTP</name>
        <dbReference type="ChEBI" id="CHEBI:37565"/>
    </ligand>
</feature>
<feature type="mutagenesis site" description="No urease activity, no effect on hydrogenase activity. Normal amounts of apourease and UreG protein are produced." evidence="3">
    <original>K</original>
    <variation>A</variation>
    <location>
        <position position="14"/>
    </location>
</feature>
<feature type="sequence conflict" description="In Ref. 1; AAA25025." evidence="4" ref="1">
    <original>D</original>
    <variation>S</variation>
    <location>
        <position position="102"/>
    </location>
</feature>
<feature type="sequence conflict" description="In Ref. 1; AAA25025." evidence="4" ref="1">
    <original>MRGEKPFIFT</original>
    <variation>IAAKSPLFLP</variation>
    <location>
        <begin position="167"/>
        <end position="176"/>
    </location>
</feature>
<feature type="strand" evidence="5">
    <location>
        <begin position="2"/>
        <end position="7"/>
    </location>
</feature>
<feature type="helix" evidence="5">
    <location>
        <begin position="14"/>
        <end position="25"/>
    </location>
</feature>
<feature type="turn" evidence="5">
    <location>
        <begin position="26"/>
        <end position="28"/>
    </location>
</feature>
<feature type="strand" evidence="5">
    <location>
        <begin position="31"/>
        <end position="35"/>
    </location>
</feature>
<feature type="helix" evidence="5">
    <location>
        <begin position="41"/>
        <end position="51"/>
    </location>
</feature>
<feature type="helix" evidence="5">
    <location>
        <begin position="55"/>
        <end position="57"/>
    </location>
</feature>
<feature type="strand" evidence="5">
    <location>
        <begin position="58"/>
        <end position="60"/>
    </location>
</feature>
<feature type="helix" evidence="5">
    <location>
        <begin position="67"/>
        <end position="71"/>
    </location>
</feature>
<feature type="helix" evidence="5">
    <location>
        <begin position="76"/>
        <end position="88"/>
    </location>
</feature>
<feature type="strand" evidence="5">
    <location>
        <begin position="94"/>
        <end position="98"/>
    </location>
</feature>
<feature type="turn" evidence="5">
    <location>
        <begin position="110"/>
        <end position="112"/>
    </location>
</feature>
<feature type="strand" evidence="5">
    <location>
        <begin position="114"/>
        <end position="121"/>
    </location>
</feature>
<feature type="turn" evidence="5">
    <location>
        <begin position="122"/>
        <end position="124"/>
    </location>
</feature>
<feature type="helix" evidence="5">
    <location>
        <begin position="128"/>
        <end position="131"/>
    </location>
</feature>
<feature type="helix" evidence="5">
    <location>
        <begin position="134"/>
        <end position="137"/>
    </location>
</feature>
<feature type="strand" evidence="5">
    <location>
        <begin position="140"/>
        <end position="145"/>
    </location>
</feature>
<feature type="helix" evidence="5">
    <location>
        <begin position="147"/>
        <end position="149"/>
    </location>
</feature>
<feature type="helix" evidence="5">
    <location>
        <begin position="150"/>
        <end position="153"/>
    </location>
</feature>
<feature type="helix" evidence="5">
    <location>
        <begin position="157"/>
        <end position="168"/>
    </location>
</feature>
<feature type="strand" evidence="5">
    <location>
        <begin position="173"/>
        <end position="175"/>
    </location>
</feature>
<feature type="turn" evidence="5">
    <location>
        <begin position="178"/>
        <end position="181"/>
    </location>
</feature>
<feature type="helix" evidence="5">
    <location>
        <begin position="184"/>
        <end position="194"/>
    </location>
</feature>
<reference key="1">
    <citation type="journal article" date="1992" name="J. Bacteriol.">
        <title>Expression of Helicobacter pylori urease genes in Escherichia coli grown under nitrogen-limiting conditions.</title>
        <authorList>
            <person name="Cussac V."/>
            <person name="Ferrero R.L."/>
            <person name="Labigne A."/>
        </authorList>
    </citation>
    <scope>NUCLEOTIDE SEQUENCE [GENOMIC DNA]</scope>
    <scope>DISRUPTION PHENOTYPE</scope>
    <source>
        <strain>85P</strain>
    </source>
</reference>
<reference key="2">
    <citation type="journal article" date="1997" name="Nature">
        <title>The complete genome sequence of the gastric pathogen Helicobacter pylori.</title>
        <authorList>
            <person name="Tomb J.-F."/>
            <person name="White O."/>
            <person name="Kerlavage A.R."/>
            <person name="Clayton R.A."/>
            <person name="Sutton G.G."/>
            <person name="Fleischmann R.D."/>
            <person name="Ketchum K.A."/>
            <person name="Klenk H.-P."/>
            <person name="Gill S.R."/>
            <person name="Dougherty B.A."/>
            <person name="Nelson K.E."/>
            <person name="Quackenbush J."/>
            <person name="Zhou L."/>
            <person name="Kirkness E.F."/>
            <person name="Peterson S.N."/>
            <person name="Loftus B.J."/>
            <person name="Richardson D.L."/>
            <person name="Dodson R.J."/>
            <person name="Khalak H.G."/>
            <person name="Glodek A."/>
            <person name="McKenney K."/>
            <person name="FitzGerald L.M."/>
            <person name="Lee N."/>
            <person name="Adams M.D."/>
            <person name="Hickey E.K."/>
            <person name="Berg D.E."/>
            <person name="Gocayne J.D."/>
            <person name="Utterback T.R."/>
            <person name="Peterson J.D."/>
            <person name="Kelley J.M."/>
            <person name="Cotton M.D."/>
            <person name="Weidman J.F."/>
            <person name="Fujii C."/>
            <person name="Bowman C."/>
            <person name="Watthey L."/>
            <person name="Wallin E."/>
            <person name="Hayes W.S."/>
            <person name="Borodovsky M."/>
            <person name="Karp P.D."/>
            <person name="Smith H.O."/>
            <person name="Fraser C.M."/>
            <person name="Venter J.C."/>
        </authorList>
    </citation>
    <scope>NUCLEOTIDE SEQUENCE [LARGE SCALE GENOMIC DNA]</scope>
    <source>
        <strain>ATCC 700392 / 26695</strain>
    </source>
</reference>
<reference key="3">
    <citation type="journal article" date="2003" name="Microb. Pathog.">
        <title>Roles of conserved nucleotide-binding domains in accessory proteins, HypB and UreG, in the maturation of nickel-enzymes required for efficient Helicobacter pylori colonization.</title>
        <authorList>
            <person name="Mehta N."/>
            <person name="Benoit S."/>
            <person name="Maier R.J."/>
        </authorList>
    </citation>
    <scope>MUTAGENESIS OF LYS-14</scope>
    <source>
        <strain>ATCC 43504 / NCTC 11637 / JCM 7653 / RPH 13487</strain>
    </source>
</reference>
<reference key="4">
    <citation type="journal article" date="2007" name="FEMS Microbiol. Lett.">
        <title>Bacterial factors that mediate colonization of the stomach and virulence of Helicobacter pylori.</title>
        <authorList>
            <person name="Clyne M."/>
            <person name="Dolan B."/>
            <person name="Reeves E.P."/>
        </authorList>
    </citation>
    <scope>REVIEW ON VIRULENCE OF H.PYLORI</scope>
</reference>
<gene>
    <name evidence="1" type="primary">ureG</name>
    <name type="ordered locus">HP_0068</name>
</gene>
<accession>Q09066</accession>
<protein>
    <recommendedName>
        <fullName evidence="1">Urease accessory protein UreG</fullName>
    </recommendedName>
</protein>